<feature type="chain" id="PRO_0000453193" description="L-tyrosine degradation gene cluster protein hmgX">
    <location>
        <begin position="1"/>
        <end position="256"/>
    </location>
</feature>
<organism>
    <name type="scientific">Aspergillus fumigatus (strain ATCC MYA-4609 / CBS 101355 / FGSC A1100 / Af293)</name>
    <name type="common">Neosartorya fumigata</name>
    <dbReference type="NCBI Taxonomy" id="330879"/>
    <lineage>
        <taxon>Eukaryota</taxon>
        <taxon>Fungi</taxon>
        <taxon>Dikarya</taxon>
        <taxon>Ascomycota</taxon>
        <taxon>Pezizomycotina</taxon>
        <taxon>Eurotiomycetes</taxon>
        <taxon>Eurotiomycetidae</taxon>
        <taxon>Eurotiales</taxon>
        <taxon>Aspergillaceae</taxon>
        <taxon>Aspergillus</taxon>
        <taxon>Aspergillus subgen. Fumigati</taxon>
    </lineage>
</organism>
<evidence type="ECO:0000269" key="1">
    <source>
    </source>
</evidence>
<evidence type="ECO:0000269" key="2">
    <source>
    </source>
</evidence>
<evidence type="ECO:0000269" key="3">
    <source>
    </source>
</evidence>
<evidence type="ECO:0000303" key="4">
    <source>
    </source>
</evidence>
<evidence type="ECO:0000305" key="5"/>
<evidence type="ECO:0000305" key="6">
    <source>
    </source>
</evidence>
<reference key="1">
    <citation type="journal article" date="2005" name="Nature">
        <title>Genomic sequence of the pathogenic and allergenic filamentous fungus Aspergillus fumigatus.</title>
        <authorList>
            <person name="Nierman W.C."/>
            <person name="Pain A."/>
            <person name="Anderson M.J."/>
            <person name="Wortman J.R."/>
            <person name="Kim H.S."/>
            <person name="Arroyo J."/>
            <person name="Berriman M."/>
            <person name="Abe K."/>
            <person name="Archer D.B."/>
            <person name="Bermejo C."/>
            <person name="Bennett J.W."/>
            <person name="Bowyer P."/>
            <person name="Chen D."/>
            <person name="Collins M."/>
            <person name="Coulsen R."/>
            <person name="Davies R."/>
            <person name="Dyer P.S."/>
            <person name="Farman M.L."/>
            <person name="Fedorova N."/>
            <person name="Fedorova N.D."/>
            <person name="Feldblyum T.V."/>
            <person name="Fischer R."/>
            <person name="Fosker N."/>
            <person name="Fraser A."/>
            <person name="Garcia J.L."/>
            <person name="Garcia M.J."/>
            <person name="Goble A."/>
            <person name="Goldman G.H."/>
            <person name="Gomi K."/>
            <person name="Griffith-Jones S."/>
            <person name="Gwilliam R."/>
            <person name="Haas B.J."/>
            <person name="Haas H."/>
            <person name="Harris D.E."/>
            <person name="Horiuchi H."/>
            <person name="Huang J."/>
            <person name="Humphray S."/>
            <person name="Jimenez J."/>
            <person name="Keller N."/>
            <person name="Khouri H."/>
            <person name="Kitamoto K."/>
            <person name="Kobayashi T."/>
            <person name="Konzack S."/>
            <person name="Kulkarni R."/>
            <person name="Kumagai T."/>
            <person name="Lafton A."/>
            <person name="Latge J.-P."/>
            <person name="Li W."/>
            <person name="Lord A."/>
            <person name="Lu C."/>
            <person name="Majoros W.H."/>
            <person name="May G.S."/>
            <person name="Miller B.L."/>
            <person name="Mohamoud Y."/>
            <person name="Molina M."/>
            <person name="Monod M."/>
            <person name="Mouyna I."/>
            <person name="Mulligan S."/>
            <person name="Murphy L.D."/>
            <person name="O'Neil S."/>
            <person name="Paulsen I."/>
            <person name="Penalva M.A."/>
            <person name="Pertea M."/>
            <person name="Price C."/>
            <person name="Pritchard B.L."/>
            <person name="Quail M.A."/>
            <person name="Rabbinowitsch E."/>
            <person name="Rawlins N."/>
            <person name="Rajandream M.A."/>
            <person name="Reichard U."/>
            <person name="Renauld H."/>
            <person name="Robson G.D."/>
            <person name="Rodriguez de Cordoba S."/>
            <person name="Rodriguez-Pena J.M."/>
            <person name="Ronning C.M."/>
            <person name="Rutter S."/>
            <person name="Salzberg S.L."/>
            <person name="Sanchez M."/>
            <person name="Sanchez-Ferrero J.C."/>
            <person name="Saunders D."/>
            <person name="Seeger K."/>
            <person name="Squares R."/>
            <person name="Squares S."/>
            <person name="Takeuchi M."/>
            <person name="Tekaia F."/>
            <person name="Turner G."/>
            <person name="Vazquez de Aldana C.R."/>
            <person name="Weidman J."/>
            <person name="White O."/>
            <person name="Woodward J.R."/>
            <person name="Yu J.-H."/>
            <person name="Fraser C.M."/>
            <person name="Galagan J.E."/>
            <person name="Asai K."/>
            <person name="Machida M."/>
            <person name="Hall N."/>
            <person name="Barrell B.G."/>
            <person name="Denning D.W."/>
        </authorList>
    </citation>
    <scope>NUCLEOTIDE SEQUENCE [LARGE SCALE GENOMIC DNA]</scope>
    <source>
        <strain>ATCC MYA-4609 / CBS 101355 / FGSC A1100 / Af293</strain>
    </source>
</reference>
<reference key="2">
    <citation type="journal article" date="2009" name="Appl. Environ. Microbiol.">
        <title>Production of pyomelanin, a second type of melanin, via the tyrosine degradation pathway in Aspergillus fumigatus.</title>
        <authorList>
            <person name="Schmaler-Ripcke J."/>
            <person name="Sugareva V."/>
            <person name="Gebhardt P."/>
            <person name="Winkler R."/>
            <person name="Kniemeyer O."/>
            <person name="Heinekamp T."/>
            <person name="Brakhage A.A."/>
        </authorList>
    </citation>
    <scope>FUNCTION</scope>
</reference>
<reference key="3">
    <citation type="journal article" date="2009" name="Fungal Genet. Biol.">
        <title>The MpkA MAP kinase module regulates cell wall integrity signaling and pyomelanin formation in Aspergillus fumigatus.</title>
        <authorList>
            <person name="Valiante V."/>
            <person name="Jain R."/>
            <person name="Heinekamp T."/>
            <person name="Brakhage A.A."/>
        </authorList>
    </citation>
    <scope>FUNCTION</scope>
</reference>
<reference key="4">
    <citation type="journal article" date="2011" name="PLoS ONE">
        <title>Pyomelanin formation in Aspergillus fumigatus requires HmgX and the transcriptional activator HmgR but is dispensable for virulence.</title>
        <authorList>
            <person name="Keller S."/>
            <person name="Macheleidt J."/>
            <person name="Scherlach K."/>
            <person name="Schmaler-Ripcke J."/>
            <person name="Jacobsen I.D."/>
            <person name="Heinekamp T."/>
            <person name="Brakhage A.A."/>
        </authorList>
    </citation>
    <scope>FUNCTION</scope>
    <scope>DISRUPTION PHENOTYPE</scope>
    <scope>INDUCTION</scope>
    <scope>SUBCELLULAR LOCATION</scope>
</reference>
<gene>
    <name evidence="4" type="primary">hmgX</name>
    <name type="ORF">AFUA_2G04210</name>
</gene>
<keyword id="KW-0963">Cytoplasm</keyword>
<keyword id="KW-1185">Reference proteome</keyword>
<proteinExistence type="evidence at transcript level"/>
<comment type="function">
    <text evidence="1 2 3 6">Part of the L-tyrosine degradation gene cluster that mediates the biosynthesis of the brownish pigment pyomelanin as an alternative melanin (PubMed:19028908, PubMed:22046314). The 4-hydroxyphenylpyruvate dioxygenase hppD catalyzes the conversion of 4-hydroxyphenylpyruvate to homogentisic acid (HGA) (PubMed:19028908, PubMed:22046314). The protein hmgX is crucial for this conversion and thus, probably functions as an accessory factor to mediate specific activity of hppD (PubMed:22046314). The homogentisate 1,2-dioxygenase hmgA is then involved in the cleavage of the aromatic ring of HGA and its conversion to 4-maleylacetoacetate (PubMed:19028908, PubMed:19715768). When hmgA activity is lowered by the cell wall integrity (CWI) signaling pathway, HGA accumulates and leads to the production of pyomelanin through benzoquinone acetic acid after oxidation and polymerization (PubMed:19715768). On the opposite, in non-stress conditions, both hppD and hmgA activities are balanced and HGA is degraded into 4-maleylacetoacetate (PubMed:19715768). 4-maleylacetoacetate is further converted to 4-fumarylacetoacetate by the maleylacetoacetate isomerase maiA, which is degraded into fumarate and acetoacetate by the fumarylacetoacetase fahA (Probable).</text>
</comment>
<comment type="subcellular location">
    <subcellularLocation>
        <location evidence="3">Cytoplasm</location>
    </subcellularLocation>
</comment>
<comment type="induction">
    <text evidence="3">Expression is induced by L-tyrosine (PubMed:22046314). Expression is positively regulated by the cluster-specific transcription factor hmgR (PubMed:22046314).</text>
</comment>
<comment type="disruption phenotype">
    <text evidence="1">Impairs growth on L-tyrosine as the sole carbon source and affects homogentisic acid and pyomelanin formation.</text>
</comment>
<comment type="similarity">
    <text evidence="5">Belongs to the TTC36 family.</text>
</comment>
<dbReference type="EMBL" id="AAHF01000008">
    <property type="protein sequence ID" value="EAL87515.1"/>
    <property type="molecule type" value="Genomic_DNA"/>
</dbReference>
<dbReference type="RefSeq" id="XP_749553.1">
    <property type="nucleotide sequence ID" value="XM_744460.1"/>
</dbReference>
<dbReference type="STRING" id="330879.Q4WHU0"/>
<dbReference type="EnsemblFungi" id="EAL87515">
    <property type="protein sequence ID" value="EAL87515"/>
    <property type="gene ID" value="AFUA_2G04210"/>
</dbReference>
<dbReference type="GeneID" id="3507121"/>
<dbReference type="KEGG" id="afm:AFUA_2G04210"/>
<dbReference type="VEuPathDB" id="FungiDB:Afu2g04210"/>
<dbReference type="eggNOG" id="KOG4555">
    <property type="taxonomic scope" value="Eukaryota"/>
</dbReference>
<dbReference type="HOGENOM" id="CLU_074601_0_0_1"/>
<dbReference type="InParanoid" id="Q4WHU0"/>
<dbReference type="OMA" id="ILYKAAR"/>
<dbReference type="OrthoDB" id="539634at2759"/>
<dbReference type="Proteomes" id="UP000002530">
    <property type="component" value="Chromosome 2"/>
</dbReference>
<dbReference type="GO" id="GO:0005737">
    <property type="term" value="C:cytoplasm"/>
    <property type="evidence" value="ECO:0000314"/>
    <property type="project" value="AspGD"/>
</dbReference>
<dbReference type="GO" id="GO:0006583">
    <property type="term" value="P:melanin biosynthetic process from tyrosine"/>
    <property type="evidence" value="ECO:0000315"/>
    <property type="project" value="AspGD"/>
</dbReference>
<dbReference type="GO" id="GO:0006572">
    <property type="term" value="P:tyrosine catabolic process"/>
    <property type="evidence" value="ECO:0000315"/>
    <property type="project" value="AspGD"/>
</dbReference>
<dbReference type="GO" id="GO:0006570">
    <property type="term" value="P:tyrosine metabolic process"/>
    <property type="evidence" value="ECO:0000318"/>
    <property type="project" value="GO_Central"/>
</dbReference>
<dbReference type="InterPro" id="IPR038906">
    <property type="entry name" value="TTC36"/>
</dbReference>
<dbReference type="PANTHER" id="PTHR21405">
    <property type="entry name" value="CDNA SEQUENCE BC021608"/>
    <property type="match status" value="1"/>
</dbReference>
<dbReference type="PANTHER" id="PTHR21405:SF0">
    <property type="entry name" value="TETRATRICOPEPTIDE REPEAT PROTEIN 36"/>
    <property type="match status" value="1"/>
</dbReference>
<name>HMGX_ASPFU</name>
<sequence>MASGTTIQPSRPSLTSNDSAVLQALFDAESSPSSAVAIDPSLSPFPEYLHISASDHESLKARELSIIRSLQSDDVSMDTITSAIRDLDALITEHPTYPSAYVNRAQALRLHIEKTAEASTDPEEAIFTPGNTESASRLFSDLGQAISLCTPRSPADPVSTVQARILADSHTHRGYLLLKAARLKKNANGNEMVGGPDKLRDMGPDQLEEMASRDFFFGGRYGNKVAQQLAVQTNPYAKMCGAIVKEALRKEVEGVI</sequence>
<protein>
    <recommendedName>
        <fullName evidence="4">L-tyrosine degradation gene cluster protein hmgX</fullName>
    </recommendedName>
    <alternativeName>
        <fullName evidence="4">Pyomelanin biosynthesis cluster protein hmgX</fullName>
    </alternativeName>
</protein>
<accession>Q4WHU0</accession>